<protein>
    <recommendedName>
        <fullName evidence="1">UPF0597 protein YhaM</fullName>
    </recommendedName>
</protein>
<gene>
    <name evidence="1" type="primary">yhaM</name>
    <name type="ordered locus">SPAB_04041</name>
</gene>
<feature type="chain" id="PRO_0000339841" description="UPF0597 protein YhaM">
    <location>
        <begin position="1"/>
        <end position="436"/>
    </location>
</feature>
<evidence type="ECO:0000255" key="1">
    <source>
        <dbReference type="HAMAP-Rule" id="MF_01845"/>
    </source>
</evidence>
<sequence>MFESKINPLWQSFILAVQEEVKPALGCTEPISLALAAAAAAAELDGTVERIDAWVSPNLMKNGMGVTVPGTGMVGLPIAAALGALGGDAKAGLEVLKDASAKAVADAKAMLAAGHVAVMLQEPCNDILFSRAKVYSGDSWACVTIVGDHTNIVRIETDKGVVFTQADNAQEEEKNSPLGVLSHTSLEEILAFVNAVPFDAIRFILDAARLNGALSQEGLRGSWGLHIGSTLAKQCDRGLLAKDLSTAILIRTSAASDARMGGATLPAMSNSGSGNQGITATVPVMVVAEHVGADDERLARALMLSHLSAIYIHYQLPRLSALCAATTAAMGAAAGMAWLIDGRYDTIAMAISSMIGDVSGMICDGASNSCAMKVSTSASAAWKAVLMALDDTAVTGNEGIVAHNVEQSIANLCSLACRSMQQTDKQIIEIMASKAH</sequence>
<name>YHAM_SALPB</name>
<proteinExistence type="inferred from homology"/>
<organism>
    <name type="scientific">Salmonella paratyphi B (strain ATCC BAA-1250 / SPB7)</name>
    <dbReference type="NCBI Taxonomy" id="1016998"/>
    <lineage>
        <taxon>Bacteria</taxon>
        <taxon>Pseudomonadati</taxon>
        <taxon>Pseudomonadota</taxon>
        <taxon>Gammaproteobacteria</taxon>
        <taxon>Enterobacterales</taxon>
        <taxon>Enterobacteriaceae</taxon>
        <taxon>Salmonella</taxon>
    </lineage>
</organism>
<reference key="1">
    <citation type="submission" date="2007-11" db="EMBL/GenBank/DDBJ databases">
        <authorList>
            <consortium name="The Salmonella enterica serovar Paratyphi B Genome Sequencing Project"/>
            <person name="McClelland M."/>
            <person name="Sanderson E.K."/>
            <person name="Porwollik S."/>
            <person name="Spieth J."/>
            <person name="Clifton W.S."/>
            <person name="Fulton R."/>
            <person name="Cordes M."/>
            <person name="Wollam A."/>
            <person name="Shah N."/>
            <person name="Pepin K."/>
            <person name="Bhonagiri V."/>
            <person name="Nash W."/>
            <person name="Johnson M."/>
            <person name="Thiruvilangam P."/>
            <person name="Wilson R."/>
        </authorList>
    </citation>
    <scope>NUCLEOTIDE SEQUENCE [LARGE SCALE GENOMIC DNA]</scope>
    <source>
        <strain>ATCC BAA-1250 / SPB7</strain>
    </source>
</reference>
<comment type="similarity">
    <text evidence="1">Belongs to the UPF0597 family.</text>
</comment>
<accession>A9N623</accession>
<dbReference type="EMBL" id="CP000886">
    <property type="protein sequence ID" value="ABX69369.1"/>
    <property type="molecule type" value="Genomic_DNA"/>
</dbReference>
<dbReference type="RefSeq" id="WP_000463067.1">
    <property type="nucleotide sequence ID" value="NC_010102.1"/>
</dbReference>
<dbReference type="SMR" id="A9N623"/>
<dbReference type="KEGG" id="spq:SPAB_04041"/>
<dbReference type="PATRIC" id="fig|1016998.12.peg.3808"/>
<dbReference type="HOGENOM" id="CLU_051840_0_0_6"/>
<dbReference type="BioCyc" id="SENT1016998:SPAB_RS16410-MONOMER"/>
<dbReference type="Proteomes" id="UP000008556">
    <property type="component" value="Chromosome"/>
</dbReference>
<dbReference type="GO" id="GO:0080146">
    <property type="term" value="F:L-cysteine desulfhydrase activity"/>
    <property type="evidence" value="ECO:0007669"/>
    <property type="project" value="TreeGrafter"/>
</dbReference>
<dbReference type="GO" id="GO:0019450">
    <property type="term" value="P:L-cysteine catabolic process to pyruvate"/>
    <property type="evidence" value="ECO:0007669"/>
    <property type="project" value="TreeGrafter"/>
</dbReference>
<dbReference type="HAMAP" id="MF_01845">
    <property type="entry name" value="UPF0597"/>
    <property type="match status" value="1"/>
</dbReference>
<dbReference type="InterPro" id="IPR005130">
    <property type="entry name" value="Ser_deHydtase-like_asu"/>
</dbReference>
<dbReference type="InterPro" id="IPR021144">
    <property type="entry name" value="UPF0597"/>
</dbReference>
<dbReference type="PANTHER" id="PTHR30501">
    <property type="entry name" value="UPF0597 PROTEIN YHAM"/>
    <property type="match status" value="1"/>
</dbReference>
<dbReference type="PANTHER" id="PTHR30501:SF2">
    <property type="entry name" value="UPF0597 PROTEIN YHAM"/>
    <property type="match status" value="1"/>
</dbReference>
<dbReference type="Pfam" id="PF03313">
    <property type="entry name" value="SDH_alpha"/>
    <property type="match status" value="1"/>
</dbReference>
<dbReference type="PIRSF" id="PIRSF006054">
    <property type="entry name" value="UCP006054"/>
    <property type="match status" value="1"/>
</dbReference>